<comment type="function">
    <text evidence="1">Catalyzes the condensation of ATP and 5-phosphoribose 1-diphosphate to form N'-(5'-phosphoribosyl)-ATP (PR-ATP). Has a crucial role in the pathway because the rate of histidine biosynthesis seems to be controlled primarily by regulation of HisG enzymatic activity (By similarity).</text>
</comment>
<comment type="catalytic activity">
    <reaction>
        <text>1-(5-phospho-beta-D-ribosyl)-ATP + diphosphate = 5-phospho-alpha-D-ribose 1-diphosphate + ATP</text>
        <dbReference type="Rhea" id="RHEA:18473"/>
        <dbReference type="ChEBI" id="CHEBI:30616"/>
        <dbReference type="ChEBI" id="CHEBI:33019"/>
        <dbReference type="ChEBI" id="CHEBI:58017"/>
        <dbReference type="ChEBI" id="CHEBI:73183"/>
        <dbReference type="EC" id="2.4.2.17"/>
    </reaction>
</comment>
<comment type="pathway">
    <text>Amino-acid biosynthesis; L-histidine biosynthesis; L-histidine from 5-phospho-alpha-D-ribose 1-diphosphate: step 1/9.</text>
</comment>
<comment type="subunit">
    <text evidence="1">Heteromultimer composed of HisG and HisZ subunits.</text>
</comment>
<comment type="subcellular location">
    <subcellularLocation>
        <location evidence="1">Cytoplasm</location>
    </subcellularLocation>
</comment>
<comment type="domain">
    <text>Lacks the C-terminal regulatory region which is replaced by HisZ.</text>
</comment>
<comment type="similarity">
    <text evidence="2">Belongs to the ATP phosphoribosyltransferase family. Short subfamily.</text>
</comment>
<name>HIS1_STAAM</name>
<proteinExistence type="inferred from homology"/>
<accession>P64348</accession>
<accession>Q99QW2</accession>
<protein>
    <recommendedName>
        <fullName>ATP phosphoribosyltransferase</fullName>
        <shortName>ATP-PRT</shortName>
        <shortName>ATP-PRTase</shortName>
        <ecNumber>2.4.2.17</ecNumber>
    </recommendedName>
</protein>
<gene>
    <name type="primary">hisG</name>
    <name type="ordered locus">SAV2679</name>
</gene>
<sequence>MLRIAIAKGRLMDSLINYLDVIEYTTLSETLKNRERQLLLSVDNIECILVKGSDVPIYVEQGMADIGIVGSDILDERQYNVNNLLNMPFGACHFAVAAKPETTNYRKIATSYVHTAETYFKSKGIDVELIKLNGSVELACVVDMVDGIVDIVQTGTTLKANGLVEKQHISDINARLITNKAAYFKKSQLIEQFIRSLEVSIANA</sequence>
<evidence type="ECO:0000250" key="1"/>
<evidence type="ECO:0000305" key="2"/>
<keyword id="KW-0028">Amino-acid biosynthesis</keyword>
<keyword id="KW-0067">ATP-binding</keyword>
<keyword id="KW-0963">Cytoplasm</keyword>
<keyword id="KW-0328">Glycosyltransferase</keyword>
<keyword id="KW-0368">Histidine biosynthesis</keyword>
<keyword id="KW-0547">Nucleotide-binding</keyword>
<keyword id="KW-0808">Transferase</keyword>
<dbReference type="EC" id="2.4.2.17"/>
<dbReference type="EMBL" id="BA000017">
    <property type="protein sequence ID" value="BAB58841.1"/>
    <property type="molecule type" value="Genomic_DNA"/>
</dbReference>
<dbReference type="RefSeq" id="WP_000944149.1">
    <property type="nucleotide sequence ID" value="NC_002758.2"/>
</dbReference>
<dbReference type="SMR" id="P64348"/>
<dbReference type="KEGG" id="sav:SAV2679"/>
<dbReference type="HOGENOM" id="CLU_038115_2_0_9"/>
<dbReference type="PhylomeDB" id="P64348"/>
<dbReference type="UniPathway" id="UPA00031">
    <property type="reaction ID" value="UER00006"/>
</dbReference>
<dbReference type="Proteomes" id="UP000002481">
    <property type="component" value="Chromosome"/>
</dbReference>
<dbReference type="GO" id="GO:0005737">
    <property type="term" value="C:cytoplasm"/>
    <property type="evidence" value="ECO:0007669"/>
    <property type="project" value="UniProtKB-SubCell"/>
</dbReference>
<dbReference type="GO" id="GO:0005524">
    <property type="term" value="F:ATP binding"/>
    <property type="evidence" value="ECO:0007669"/>
    <property type="project" value="UniProtKB-KW"/>
</dbReference>
<dbReference type="GO" id="GO:0003879">
    <property type="term" value="F:ATP phosphoribosyltransferase activity"/>
    <property type="evidence" value="ECO:0007669"/>
    <property type="project" value="UniProtKB-UniRule"/>
</dbReference>
<dbReference type="GO" id="GO:0000105">
    <property type="term" value="P:L-histidine biosynthetic process"/>
    <property type="evidence" value="ECO:0007669"/>
    <property type="project" value="UniProtKB-UniRule"/>
</dbReference>
<dbReference type="CDD" id="cd13595">
    <property type="entry name" value="PBP2_HisGs"/>
    <property type="match status" value="1"/>
</dbReference>
<dbReference type="FunFam" id="3.40.190.10:FF:000008">
    <property type="entry name" value="ATP phosphoribosyltransferase"/>
    <property type="match status" value="1"/>
</dbReference>
<dbReference type="Gene3D" id="3.40.190.10">
    <property type="entry name" value="Periplasmic binding protein-like II"/>
    <property type="match status" value="2"/>
</dbReference>
<dbReference type="HAMAP" id="MF_01018">
    <property type="entry name" value="HisG_Short"/>
    <property type="match status" value="1"/>
</dbReference>
<dbReference type="InterPro" id="IPR013820">
    <property type="entry name" value="ATP_PRibTrfase_cat"/>
</dbReference>
<dbReference type="InterPro" id="IPR001348">
    <property type="entry name" value="ATP_PRibTrfase_HisG"/>
</dbReference>
<dbReference type="InterPro" id="IPR024893">
    <property type="entry name" value="ATP_PRibTrfase_HisG_short"/>
</dbReference>
<dbReference type="NCBIfam" id="TIGR00070">
    <property type="entry name" value="hisG"/>
    <property type="match status" value="1"/>
</dbReference>
<dbReference type="PANTHER" id="PTHR21403:SF8">
    <property type="entry name" value="ATP PHOSPHORIBOSYLTRANSFERASE"/>
    <property type="match status" value="1"/>
</dbReference>
<dbReference type="PANTHER" id="PTHR21403">
    <property type="entry name" value="ATP PHOSPHORIBOSYLTRANSFERASE ATP-PRTASE"/>
    <property type="match status" value="1"/>
</dbReference>
<dbReference type="Pfam" id="PF01634">
    <property type="entry name" value="HisG"/>
    <property type="match status" value="1"/>
</dbReference>
<dbReference type="SUPFAM" id="SSF53850">
    <property type="entry name" value="Periplasmic binding protein-like II"/>
    <property type="match status" value="1"/>
</dbReference>
<organism>
    <name type="scientific">Staphylococcus aureus (strain Mu50 / ATCC 700699)</name>
    <dbReference type="NCBI Taxonomy" id="158878"/>
    <lineage>
        <taxon>Bacteria</taxon>
        <taxon>Bacillati</taxon>
        <taxon>Bacillota</taxon>
        <taxon>Bacilli</taxon>
        <taxon>Bacillales</taxon>
        <taxon>Staphylococcaceae</taxon>
        <taxon>Staphylococcus</taxon>
    </lineage>
</organism>
<feature type="chain" id="PRO_0000151932" description="ATP phosphoribosyltransferase">
    <location>
        <begin position="1"/>
        <end position="204"/>
    </location>
</feature>
<reference key="1">
    <citation type="journal article" date="2001" name="Lancet">
        <title>Whole genome sequencing of meticillin-resistant Staphylococcus aureus.</title>
        <authorList>
            <person name="Kuroda M."/>
            <person name="Ohta T."/>
            <person name="Uchiyama I."/>
            <person name="Baba T."/>
            <person name="Yuzawa H."/>
            <person name="Kobayashi I."/>
            <person name="Cui L."/>
            <person name="Oguchi A."/>
            <person name="Aoki K."/>
            <person name="Nagai Y."/>
            <person name="Lian J.-Q."/>
            <person name="Ito T."/>
            <person name="Kanamori M."/>
            <person name="Matsumaru H."/>
            <person name="Maruyama A."/>
            <person name="Murakami H."/>
            <person name="Hosoyama A."/>
            <person name="Mizutani-Ui Y."/>
            <person name="Takahashi N.K."/>
            <person name="Sawano T."/>
            <person name="Inoue R."/>
            <person name="Kaito C."/>
            <person name="Sekimizu K."/>
            <person name="Hirakawa H."/>
            <person name="Kuhara S."/>
            <person name="Goto S."/>
            <person name="Yabuzaki J."/>
            <person name="Kanehisa M."/>
            <person name="Yamashita A."/>
            <person name="Oshima K."/>
            <person name="Furuya K."/>
            <person name="Yoshino C."/>
            <person name="Shiba T."/>
            <person name="Hattori M."/>
            <person name="Ogasawara N."/>
            <person name="Hayashi H."/>
            <person name="Hiramatsu K."/>
        </authorList>
    </citation>
    <scope>NUCLEOTIDE SEQUENCE [LARGE SCALE GENOMIC DNA]</scope>
    <source>
        <strain>Mu50 / ATCC 700699</strain>
    </source>
</reference>